<dbReference type="EC" id="3.1.-.-" evidence="1"/>
<dbReference type="EMBL" id="CP000253">
    <property type="protein sequence ID" value="ABD30076.1"/>
    <property type="molecule type" value="Genomic_DNA"/>
</dbReference>
<dbReference type="RefSeq" id="WP_000600392.1">
    <property type="nucleotide sequence ID" value="NZ_LS483365.1"/>
</dbReference>
<dbReference type="RefSeq" id="YP_499504.1">
    <property type="nucleotide sequence ID" value="NC_007795.1"/>
</dbReference>
<dbReference type="SMR" id="Q2FZP9"/>
<dbReference type="STRING" id="93061.SAOUHSC_00951"/>
<dbReference type="PaxDb" id="1280-SAXN108_1011"/>
<dbReference type="GeneID" id="3920662"/>
<dbReference type="KEGG" id="sao:SAOUHSC_00951"/>
<dbReference type="PATRIC" id="fig|93061.5.peg.872"/>
<dbReference type="eggNOG" id="COG1514">
    <property type="taxonomic scope" value="Bacteria"/>
</dbReference>
<dbReference type="HOGENOM" id="CLU_132020_0_0_9"/>
<dbReference type="OrthoDB" id="1524661at2"/>
<dbReference type="PRO" id="PR:Q2FZP9"/>
<dbReference type="Proteomes" id="UP000008816">
    <property type="component" value="Chromosome"/>
</dbReference>
<dbReference type="GO" id="GO:0016788">
    <property type="term" value="F:hydrolase activity, acting on ester bonds"/>
    <property type="evidence" value="ECO:0007669"/>
    <property type="project" value="UniProtKB-UniRule"/>
</dbReference>
<dbReference type="Gene3D" id="3.90.1140.10">
    <property type="entry name" value="Cyclic phosphodiesterase"/>
    <property type="match status" value="1"/>
</dbReference>
<dbReference type="HAMAP" id="MF_01444">
    <property type="entry name" value="2H_phosphoesterase_YjcG"/>
    <property type="match status" value="1"/>
</dbReference>
<dbReference type="InterPro" id="IPR050580">
    <property type="entry name" value="2H_phosphoesterase_YjcG-like"/>
</dbReference>
<dbReference type="InterPro" id="IPR009097">
    <property type="entry name" value="Cyclic_Pdiesterase"/>
</dbReference>
<dbReference type="InterPro" id="IPR022932">
    <property type="entry name" value="YjcG"/>
</dbReference>
<dbReference type="NCBIfam" id="NF010223">
    <property type="entry name" value="PRK13679.1"/>
    <property type="match status" value="1"/>
</dbReference>
<dbReference type="PANTHER" id="PTHR40037:SF1">
    <property type="entry name" value="PHOSPHOESTERASE SAOUHSC_00951-RELATED"/>
    <property type="match status" value="1"/>
</dbReference>
<dbReference type="PANTHER" id="PTHR40037">
    <property type="entry name" value="PHOSPHOESTERASE YJCG-RELATED"/>
    <property type="match status" value="1"/>
</dbReference>
<dbReference type="Pfam" id="PF13563">
    <property type="entry name" value="2_5_RNA_ligase2"/>
    <property type="match status" value="1"/>
</dbReference>
<dbReference type="SUPFAM" id="SSF55144">
    <property type="entry name" value="LigT-like"/>
    <property type="match status" value="1"/>
</dbReference>
<protein>
    <recommendedName>
        <fullName evidence="1">Putative phosphoesterase SAOUHSC_00951</fullName>
        <ecNumber evidence="1">3.1.-.-</ecNumber>
    </recommendedName>
</protein>
<name>Y951_STAA8</name>
<feature type="chain" id="PRO_0000299344" description="Putative phosphoesterase SAOUHSC_00951">
    <location>
        <begin position="1"/>
        <end position="169"/>
    </location>
</feature>
<feature type="short sequence motif" description="HXTX 1" evidence="1">
    <location>
        <begin position="34"/>
        <end position="37"/>
    </location>
</feature>
<feature type="short sequence motif" description="HXTX 2" evidence="1">
    <location>
        <begin position="115"/>
        <end position="118"/>
    </location>
</feature>
<feature type="active site" description="Proton donor" evidence="1">
    <location>
        <position position="34"/>
    </location>
</feature>
<feature type="active site" description="Proton acceptor" evidence="1">
    <location>
        <position position="115"/>
    </location>
</feature>
<evidence type="ECO:0000255" key="1">
    <source>
        <dbReference type="HAMAP-Rule" id="MF_01444"/>
    </source>
</evidence>
<accession>Q2FZP9</accession>
<gene>
    <name type="ordered locus">SAOUHSC_00951</name>
</gene>
<sequence>MILGLALIPSKSFQEAVDSYRKRYDKQYSRIKPHVTIKAPFEIKDGDLDSVIEQVRARINGIPAVEVHATKASSFKPTNNVIYFKVAKTDDLEELFNRFNGEDFYGEAEHVFVPHFTIAQGLSSQEFEDIFGQVALAGVDHKEIIDELTLLRFDDDEDKWKVIETFKLA</sequence>
<keyword id="KW-0378">Hydrolase</keyword>
<keyword id="KW-1185">Reference proteome</keyword>
<organism>
    <name type="scientific">Staphylococcus aureus (strain NCTC 8325 / PS 47)</name>
    <dbReference type="NCBI Taxonomy" id="93061"/>
    <lineage>
        <taxon>Bacteria</taxon>
        <taxon>Bacillati</taxon>
        <taxon>Bacillota</taxon>
        <taxon>Bacilli</taxon>
        <taxon>Bacillales</taxon>
        <taxon>Staphylococcaceae</taxon>
        <taxon>Staphylococcus</taxon>
    </lineage>
</organism>
<reference key="1">
    <citation type="book" date="2006" name="Gram positive pathogens, 2nd edition">
        <title>The Staphylococcus aureus NCTC 8325 genome.</title>
        <editorList>
            <person name="Fischetti V."/>
            <person name="Novick R."/>
            <person name="Ferretti J."/>
            <person name="Portnoy D."/>
            <person name="Rood J."/>
        </editorList>
        <authorList>
            <person name="Gillaspy A.F."/>
            <person name="Worrell V."/>
            <person name="Orvis J."/>
            <person name="Roe B.A."/>
            <person name="Dyer D.W."/>
            <person name="Iandolo J.J."/>
        </authorList>
    </citation>
    <scope>NUCLEOTIDE SEQUENCE [LARGE SCALE GENOMIC DNA]</scope>
    <source>
        <strain>NCTC 8325 / PS 47</strain>
    </source>
</reference>
<proteinExistence type="inferred from homology"/>
<comment type="similarity">
    <text evidence="1">Belongs to the 2H phosphoesterase superfamily. YjcG family.</text>
</comment>